<organism>
    <name type="scientific">Caenorhabditis briggsae</name>
    <dbReference type="NCBI Taxonomy" id="6238"/>
    <lineage>
        <taxon>Eukaryota</taxon>
        <taxon>Metazoa</taxon>
        <taxon>Ecdysozoa</taxon>
        <taxon>Nematoda</taxon>
        <taxon>Chromadorea</taxon>
        <taxon>Rhabditida</taxon>
        <taxon>Rhabditina</taxon>
        <taxon>Rhabditomorpha</taxon>
        <taxon>Rhabditoidea</taxon>
        <taxon>Rhabditidae</taxon>
        <taxon>Peloderinae</taxon>
        <taxon>Caenorhabditis</taxon>
    </lineage>
</organism>
<gene>
    <name type="ORF">CBG13541</name>
</gene>
<keyword id="KW-0539">Nucleus</keyword>
<keyword id="KW-1185">Reference proteome</keyword>
<keyword id="KW-0677">Repeat</keyword>
<keyword id="KW-0687">Ribonucleoprotein</keyword>
<keyword id="KW-0690">Ribosome biogenesis</keyword>
<keyword id="KW-0694">RNA-binding</keyword>
<keyword id="KW-0698">rRNA processing</keyword>
<evidence type="ECO:0000250" key="1"/>
<evidence type="ECO:0000256" key="2">
    <source>
        <dbReference type="SAM" id="MobiDB-lite"/>
    </source>
</evidence>
<evidence type="ECO:0000305" key="3"/>
<comment type="function">
    <text evidence="1">Required for ribosome biogenesis. Part of a complex which catalyzes pseudouridylation of rRNA. This involves the isomerization of uridine such that the ribose is subsequently attached to C5, instead of the normal N1. Pseudouridine ('psi') residues may serve to stabilize the conformation of rRNAs (By similarity).</text>
</comment>
<comment type="subunit">
    <text evidence="1">Component of the small nucleolar ribonucleoprotein particle containing H/ACA-type snoRNAs (H/ACA snoRNPs).</text>
</comment>
<comment type="subcellular location">
    <subcellularLocation>
        <location evidence="1">Nucleus</location>
        <location evidence="1">Nucleolus</location>
    </subcellularLocation>
</comment>
<comment type="similarity">
    <text evidence="3">Belongs to the GAR1 family.</text>
</comment>
<feature type="chain" id="PRO_0000208557" description="Probable H/ACA ribonucleoprotein complex subunit 1-like protein">
    <location>
        <begin position="1"/>
        <end position="246"/>
    </location>
</feature>
<feature type="region of interest" description="Disordered" evidence="2">
    <location>
        <begin position="1"/>
        <end position="61"/>
    </location>
</feature>
<feature type="region of interest" description="RGG-box 1">
    <location>
        <begin position="4"/>
        <end position="59"/>
    </location>
</feature>
<feature type="region of interest" description="Disordered" evidence="2">
    <location>
        <begin position="155"/>
        <end position="246"/>
    </location>
</feature>
<feature type="region of interest" description="RGG-box 2">
    <location>
        <begin position="161"/>
        <end position="223"/>
    </location>
</feature>
<feature type="compositionally biased region" description="Basic and acidic residues" evidence="2">
    <location>
        <begin position="168"/>
        <end position="180"/>
    </location>
</feature>
<feature type="compositionally biased region" description="Gly residues" evidence="2">
    <location>
        <begin position="181"/>
        <end position="221"/>
    </location>
</feature>
<accession>Q61B10</accession>
<accession>A8XI51</accession>
<dbReference type="EMBL" id="HE600980">
    <property type="protein sequence ID" value="CAP32325.1"/>
    <property type="molecule type" value="Genomic_DNA"/>
</dbReference>
<dbReference type="RefSeq" id="XP_002635001.1">
    <property type="nucleotide sequence ID" value="XM_002634955.1"/>
</dbReference>
<dbReference type="SMR" id="Q61B10"/>
<dbReference type="FunCoup" id="Q61B10">
    <property type="interactions" value="909"/>
</dbReference>
<dbReference type="STRING" id="6238.Q61B10"/>
<dbReference type="EnsemblMetazoa" id="CBG13541.1">
    <property type="protein sequence ID" value="CBG13541.1"/>
    <property type="gene ID" value="WBGene00034295"/>
</dbReference>
<dbReference type="GeneID" id="8576996"/>
<dbReference type="KEGG" id="cbr:CBG_13541"/>
<dbReference type="CTD" id="8576996"/>
<dbReference type="WormBase" id="CBG13541">
    <property type="protein sequence ID" value="CBP03265"/>
    <property type="gene ID" value="WBGene00034295"/>
</dbReference>
<dbReference type="eggNOG" id="KOG3262">
    <property type="taxonomic scope" value="Eukaryota"/>
</dbReference>
<dbReference type="HOGENOM" id="CLU_080002_0_0_1"/>
<dbReference type="InParanoid" id="Q61B10"/>
<dbReference type="OMA" id="CTNDGYN"/>
<dbReference type="OrthoDB" id="2187159at2759"/>
<dbReference type="Proteomes" id="UP000008549">
    <property type="component" value="Unassembled WGS sequence"/>
</dbReference>
<dbReference type="GO" id="GO:0031429">
    <property type="term" value="C:box H/ACA snoRNP complex"/>
    <property type="evidence" value="ECO:0000318"/>
    <property type="project" value="GO_Central"/>
</dbReference>
<dbReference type="GO" id="GO:0034513">
    <property type="term" value="F:box H/ACA snoRNA binding"/>
    <property type="evidence" value="ECO:0000318"/>
    <property type="project" value="GO_Central"/>
</dbReference>
<dbReference type="GO" id="GO:0000454">
    <property type="term" value="P:snoRNA guided rRNA pseudouridine synthesis"/>
    <property type="evidence" value="ECO:0000318"/>
    <property type="project" value="GO_Central"/>
</dbReference>
<dbReference type="FunFam" id="2.40.10.230:FF:000001">
    <property type="entry name" value="H/ACA ribonucleoprotein complex subunit"/>
    <property type="match status" value="1"/>
</dbReference>
<dbReference type="Gene3D" id="2.40.10.230">
    <property type="entry name" value="Probable tRNA pseudouridine synthase domain"/>
    <property type="match status" value="1"/>
</dbReference>
<dbReference type="InterPro" id="IPR038664">
    <property type="entry name" value="Gar1/Naf1_Cbf5-bd_sf"/>
</dbReference>
<dbReference type="InterPro" id="IPR007504">
    <property type="entry name" value="H/ACA_rnp_Gar1/Naf1"/>
</dbReference>
<dbReference type="InterPro" id="IPR009000">
    <property type="entry name" value="Transl_B-barrel_sf"/>
</dbReference>
<dbReference type="PANTHER" id="PTHR23237:SF6">
    <property type="entry name" value="H_ACA RIBONUCLEOPROTEIN COMPLEX SUBUNIT 1"/>
    <property type="match status" value="1"/>
</dbReference>
<dbReference type="PANTHER" id="PTHR23237">
    <property type="entry name" value="NUCLEOLAR PROTEIN FAMILY A MEMBER 1 SNORNP PROTEIN GAR1"/>
    <property type="match status" value="1"/>
</dbReference>
<dbReference type="Pfam" id="PF04410">
    <property type="entry name" value="Gar1"/>
    <property type="match status" value="1"/>
</dbReference>
<dbReference type="SUPFAM" id="SSF50447">
    <property type="entry name" value="Translation proteins"/>
    <property type="match status" value="1"/>
</dbReference>
<protein>
    <recommendedName>
        <fullName>Probable H/ACA ribonucleoprotein complex subunit 1-like protein</fullName>
    </recommendedName>
</protein>
<name>GAR1_CAEBR</name>
<sequence length="246" mass="24385">MSFRGGRGGGGGGGFRGGRGGGGGGGFRGGRGGDRGGGGFRGGRGGGGRGGFGGGGRGGYDQGPPEEVVLVGVFSHKCQDDIVCNNTSGKIPYFNAPIYFENKEQVGKIDEIFGSPGENGFSVTLSQGVKASSFKSGSELYIDPGKLLPVERFLPQVGGGRGRGGRGRGGDRGRGGDRGRGGFGGRGGGGGGFRGGSRGGFGGGDRGGFRGGRGGDFGGRGRGGDFKRSYDGGGYGGNSNKRTKFD</sequence>
<proteinExistence type="inferred from homology"/>
<reference key="1">
    <citation type="journal article" date="2003" name="PLoS Biol.">
        <title>The genome sequence of Caenorhabditis briggsae: a platform for comparative genomics.</title>
        <authorList>
            <person name="Stein L.D."/>
            <person name="Bao Z."/>
            <person name="Blasiar D."/>
            <person name="Blumenthal T."/>
            <person name="Brent M.R."/>
            <person name="Chen N."/>
            <person name="Chinwalla A."/>
            <person name="Clarke L."/>
            <person name="Clee C."/>
            <person name="Coghlan A."/>
            <person name="Coulson A."/>
            <person name="D'Eustachio P."/>
            <person name="Fitch D.H.A."/>
            <person name="Fulton L.A."/>
            <person name="Fulton R.E."/>
            <person name="Griffiths-Jones S."/>
            <person name="Harris T.W."/>
            <person name="Hillier L.W."/>
            <person name="Kamath R."/>
            <person name="Kuwabara P.E."/>
            <person name="Mardis E.R."/>
            <person name="Marra M.A."/>
            <person name="Miner T.L."/>
            <person name="Minx P."/>
            <person name="Mullikin J.C."/>
            <person name="Plumb R.W."/>
            <person name="Rogers J."/>
            <person name="Schein J.E."/>
            <person name="Sohrmann M."/>
            <person name="Spieth J."/>
            <person name="Stajich J.E."/>
            <person name="Wei C."/>
            <person name="Willey D."/>
            <person name="Wilson R.K."/>
            <person name="Durbin R.M."/>
            <person name="Waterston R.H."/>
        </authorList>
    </citation>
    <scope>NUCLEOTIDE SEQUENCE [LARGE SCALE GENOMIC DNA]</scope>
    <source>
        <strain>AF16</strain>
    </source>
</reference>